<feature type="chain" id="PRO_0000176934" description="Transcription elongation factor GreA 1">
    <location>
        <begin position="1"/>
        <end position="156"/>
    </location>
</feature>
<feature type="coiled-coil region" evidence="1">
    <location>
        <begin position="43"/>
        <end position="74"/>
    </location>
</feature>
<keyword id="KW-0175">Coiled coil</keyword>
<keyword id="KW-0238">DNA-binding</keyword>
<keyword id="KW-1185">Reference proteome</keyword>
<keyword id="KW-0804">Transcription</keyword>
<keyword id="KW-0805">Transcription regulation</keyword>
<accession>Q88ZS9</accession>
<accession>F9UT27</accession>
<dbReference type="EMBL" id="AL935263">
    <property type="protein sequence ID" value="CCC77758.1"/>
    <property type="molecule type" value="Genomic_DNA"/>
</dbReference>
<dbReference type="RefSeq" id="YP_004888272.1">
    <property type="nucleotide sequence ID" value="NC_004567.2"/>
</dbReference>
<dbReference type="SMR" id="Q88ZS9"/>
<dbReference type="STRING" id="220668.lp_0223"/>
<dbReference type="EnsemblBacteria" id="CCC77758">
    <property type="protein sequence ID" value="CCC77758"/>
    <property type="gene ID" value="lp_0223"/>
</dbReference>
<dbReference type="KEGG" id="lpl:lp_0223"/>
<dbReference type="PATRIC" id="fig|220668.9.peg.185"/>
<dbReference type="eggNOG" id="COG0782">
    <property type="taxonomic scope" value="Bacteria"/>
</dbReference>
<dbReference type="HOGENOM" id="CLU_101379_2_1_9"/>
<dbReference type="OrthoDB" id="9808774at2"/>
<dbReference type="PhylomeDB" id="Q88ZS9"/>
<dbReference type="Proteomes" id="UP000000432">
    <property type="component" value="Chromosome"/>
</dbReference>
<dbReference type="GO" id="GO:0003677">
    <property type="term" value="F:DNA binding"/>
    <property type="evidence" value="ECO:0007669"/>
    <property type="project" value="UniProtKB-UniRule"/>
</dbReference>
<dbReference type="GO" id="GO:0070063">
    <property type="term" value="F:RNA polymerase binding"/>
    <property type="evidence" value="ECO:0007669"/>
    <property type="project" value="InterPro"/>
</dbReference>
<dbReference type="GO" id="GO:0006354">
    <property type="term" value="P:DNA-templated transcription elongation"/>
    <property type="evidence" value="ECO:0007669"/>
    <property type="project" value="TreeGrafter"/>
</dbReference>
<dbReference type="GO" id="GO:0032784">
    <property type="term" value="P:regulation of DNA-templated transcription elongation"/>
    <property type="evidence" value="ECO:0007669"/>
    <property type="project" value="UniProtKB-UniRule"/>
</dbReference>
<dbReference type="FunFam" id="1.10.287.180:FF:000001">
    <property type="entry name" value="Transcription elongation factor GreA"/>
    <property type="match status" value="1"/>
</dbReference>
<dbReference type="FunFam" id="3.10.50.30:FF:000001">
    <property type="entry name" value="Transcription elongation factor GreA"/>
    <property type="match status" value="1"/>
</dbReference>
<dbReference type="Gene3D" id="3.10.50.30">
    <property type="entry name" value="Transcription elongation factor, GreA/GreB, C-terminal domain"/>
    <property type="match status" value="1"/>
</dbReference>
<dbReference type="Gene3D" id="1.10.287.180">
    <property type="entry name" value="Transcription elongation factor, GreA/GreB, N-terminal domain"/>
    <property type="match status" value="1"/>
</dbReference>
<dbReference type="HAMAP" id="MF_00105">
    <property type="entry name" value="GreA_GreB"/>
    <property type="match status" value="1"/>
</dbReference>
<dbReference type="InterPro" id="IPR036953">
    <property type="entry name" value="GreA/GreB_C_sf"/>
</dbReference>
<dbReference type="InterPro" id="IPR018151">
    <property type="entry name" value="TF_GreA/GreB_CS"/>
</dbReference>
<dbReference type="InterPro" id="IPR006359">
    <property type="entry name" value="Tscrpt_elong_fac_GreA"/>
</dbReference>
<dbReference type="InterPro" id="IPR028624">
    <property type="entry name" value="Tscrpt_elong_fac_GreA/B"/>
</dbReference>
<dbReference type="InterPro" id="IPR001437">
    <property type="entry name" value="Tscrpt_elong_fac_GreA/B_C"/>
</dbReference>
<dbReference type="InterPro" id="IPR023459">
    <property type="entry name" value="Tscrpt_elong_fac_GreA/B_fam"/>
</dbReference>
<dbReference type="InterPro" id="IPR022691">
    <property type="entry name" value="Tscrpt_elong_fac_GreA/B_N"/>
</dbReference>
<dbReference type="InterPro" id="IPR036805">
    <property type="entry name" value="Tscrpt_elong_fac_GreA/B_N_sf"/>
</dbReference>
<dbReference type="NCBIfam" id="TIGR01462">
    <property type="entry name" value="greA"/>
    <property type="match status" value="1"/>
</dbReference>
<dbReference type="NCBIfam" id="NF001263">
    <property type="entry name" value="PRK00226.1-4"/>
    <property type="match status" value="1"/>
</dbReference>
<dbReference type="PANTHER" id="PTHR30437">
    <property type="entry name" value="TRANSCRIPTION ELONGATION FACTOR GREA"/>
    <property type="match status" value="1"/>
</dbReference>
<dbReference type="PANTHER" id="PTHR30437:SF4">
    <property type="entry name" value="TRANSCRIPTION ELONGATION FACTOR GREA"/>
    <property type="match status" value="1"/>
</dbReference>
<dbReference type="Pfam" id="PF01272">
    <property type="entry name" value="GreA_GreB"/>
    <property type="match status" value="1"/>
</dbReference>
<dbReference type="Pfam" id="PF03449">
    <property type="entry name" value="GreA_GreB_N"/>
    <property type="match status" value="1"/>
</dbReference>
<dbReference type="PIRSF" id="PIRSF006092">
    <property type="entry name" value="GreA_GreB"/>
    <property type="match status" value="1"/>
</dbReference>
<dbReference type="SUPFAM" id="SSF54534">
    <property type="entry name" value="FKBP-like"/>
    <property type="match status" value="1"/>
</dbReference>
<dbReference type="SUPFAM" id="SSF46557">
    <property type="entry name" value="GreA transcript cleavage protein, N-terminal domain"/>
    <property type="match status" value="1"/>
</dbReference>
<dbReference type="PROSITE" id="PS00829">
    <property type="entry name" value="GREAB_1"/>
    <property type="match status" value="1"/>
</dbReference>
<reference key="1">
    <citation type="journal article" date="2003" name="Proc. Natl. Acad. Sci. U.S.A.">
        <title>Complete genome sequence of Lactobacillus plantarum WCFS1.</title>
        <authorList>
            <person name="Kleerebezem M."/>
            <person name="Boekhorst J."/>
            <person name="van Kranenburg R."/>
            <person name="Molenaar D."/>
            <person name="Kuipers O.P."/>
            <person name="Leer R."/>
            <person name="Tarchini R."/>
            <person name="Peters S.A."/>
            <person name="Sandbrink H.M."/>
            <person name="Fiers M.W.E.J."/>
            <person name="Stiekema W."/>
            <person name="Klein Lankhorst R.M."/>
            <person name="Bron P.A."/>
            <person name="Hoffer S.M."/>
            <person name="Nierop Groot M.N."/>
            <person name="Kerkhoven R."/>
            <person name="De Vries M."/>
            <person name="Ursing B."/>
            <person name="De Vos W.M."/>
            <person name="Siezen R.J."/>
        </authorList>
    </citation>
    <scope>NUCLEOTIDE SEQUENCE [LARGE SCALE GENOMIC DNA]</scope>
    <source>
        <strain>ATCC BAA-793 / NCIMB 8826 / WCFS1</strain>
    </source>
</reference>
<reference key="2">
    <citation type="journal article" date="2012" name="J. Bacteriol.">
        <title>Complete resequencing and reannotation of the Lactobacillus plantarum WCFS1 genome.</title>
        <authorList>
            <person name="Siezen R.J."/>
            <person name="Francke C."/>
            <person name="Renckens B."/>
            <person name="Boekhorst J."/>
            <person name="Wels M."/>
            <person name="Kleerebezem M."/>
            <person name="van Hijum S.A."/>
        </authorList>
    </citation>
    <scope>NUCLEOTIDE SEQUENCE [LARGE SCALE GENOMIC DNA]</scope>
    <scope>GENOME REANNOTATION</scope>
    <source>
        <strain>ATCC BAA-793 / NCIMB 8826 / WCFS1</strain>
    </source>
</reference>
<evidence type="ECO:0000255" key="1">
    <source>
        <dbReference type="HAMAP-Rule" id="MF_00105"/>
    </source>
</evidence>
<gene>
    <name evidence="1" type="primary">greA1</name>
    <name type="ordered locus">lp_0223</name>
</gene>
<protein>
    <recommendedName>
        <fullName evidence="1">Transcription elongation factor GreA 1</fullName>
    </recommendedName>
    <alternativeName>
        <fullName evidence="1">Transcript cleavage factor GreA 1</fullName>
    </alternativeName>
</protein>
<sequence>MEPTFNKMTAAGYHAIEQEIEDLKQQRPERIRILAAAAALGDRSENAEYSSAKRDLGRLESRLRYLNKQLQYAQIVQPADNDQLDIGKFVTIEFLDDHDQITYQLVGKQEANLEQQKISFTSPIGQALANHTVDDVVTVNAPNGAYQVKVIAVKRA</sequence>
<name>GREA1_LACPL</name>
<proteinExistence type="inferred from homology"/>
<comment type="function">
    <text evidence="1">Necessary for efficient RNA polymerase transcription elongation past template-encoded arresting sites. The arresting sites in DNA have the property of trapping a certain fraction of elongating RNA polymerases that pass through, resulting in locked ternary complexes. Cleavage of the nascent transcript by cleavage factors such as GreA or GreB allows the resumption of elongation from the new 3'terminus. GreA releases sequences of 2 to 3 nucleotides.</text>
</comment>
<comment type="similarity">
    <text evidence="1">Belongs to the GreA/GreB family.</text>
</comment>
<organism>
    <name type="scientific">Lactiplantibacillus plantarum (strain ATCC BAA-793 / NCIMB 8826 / WCFS1)</name>
    <name type="common">Lactobacillus plantarum</name>
    <dbReference type="NCBI Taxonomy" id="220668"/>
    <lineage>
        <taxon>Bacteria</taxon>
        <taxon>Bacillati</taxon>
        <taxon>Bacillota</taxon>
        <taxon>Bacilli</taxon>
        <taxon>Lactobacillales</taxon>
        <taxon>Lactobacillaceae</taxon>
        <taxon>Lactiplantibacillus</taxon>
    </lineage>
</organism>